<reference key="1">
    <citation type="journal article" date="2000" name="J. Gen. Virol.">
        <title>Long-term mutation rates in the hepatitis B virus genome.</title>
        <authorList>
            <person name="Hannoun C."/>
            <person name="Horal P."/>
            <person name="Lindh M."/>
        </authorList>
    </citation>
    <scope>NUCLEOTIDE SEQUENCE [GENOMIC DNA]</scope>
    <source>
        <strain>HBV/14611</strain>
        <strain>HBV/16091</strain>
        <strain>HBV/IK29902</strain>
    </source>
</reference>
<reference key="2">
    <citation type="journal article" date="2007" name="World J. Gastroenterol.">
        <title>Hepatitis B virus replication.</title>
        <authorList>
            <person name="Beck J."/>
            <person name="Nassal M."/>
        </authorList>
    </citation>
    <scope>REVIEW</scope>
</reference>
<gene>
    <name evidence="1" type="primary">P</name>
</gene>
<dbReference type="EC" id="2.7.7.7" evidence="1"/>
<dbReference type="EC" id="2.7.7.49" evidence="1"/>
<dbReference type="EC" id="3.1.26.4" evidence="1"/>
<dbReference type="EMBL" id="AF121243">
    <property type="protein sequence ID" value="AAF24686.1"/>
    <property type="molecule type" value="Genomic_DNA"/>
</dbReference>
<dbReference type="EMBL" id="AF121245">
    <property type="protein sequence ID" value="AAF24700.1"/>
    <property type="molecule type" value="Genomic_DNA"/>
</dbReference>
<dbReference type="EMBL" id="AF121246">
    <property type="protein sequence ID" value="AAF24707.1"/>
    <property type="molecule type" value="Genomic_DNA"/>
</dbReference>
<dbReference type="Proteomes" id="UP000001386">
    <property type="component" value="Genome"/>
</dbReference>
<dbReference type="Proteomes" id="UP000158684">
    <property type="component" value="Genome"/>
</dbReference>
<dbReference type="Proteomes" id="UP000168764">
    <property type="component" value="Genome"/>
</dbReference>
<dbReference type="GO" id="GO:0003677">
    <property type="term" value="F:DNA binding"/>
    <property type="evidence" value="ECO:0007669"/>
    <property type="project" value="UniProtKB-UniRule"/>
</dbReference>
<dbReference type="GO" id="GO:0003887">
    <property type="term" value="F:DNA-directed DNA polymerase activity"/>
    <property type="evidence" value="ECO:0007669"/>
    <property type="project" value="UniProtKB-UniRule"/>
</dbReference>
<dbReference type="GO" id="GO:0046872">
    <property type="term" value="F:metal ion binding"/>
    <property type="evidence" value="ECO:0007669"/>
    <property type="project" value="UniProtKB-UniRule"/>
</dbReference>
<dbReference type="GO" id="GO:0003964">
    <property type="term" value="F:RNA-directed DNA polymerase activity"/>
    <property type="evidence" value="ECO:0007669"/>
    <property type="project" value="UniProtKB-UniRule"/>
</dbReference>
<dbReference type="GO" id="GO:0004523">
    <property type="term" value="F:RNA-DNA hybrid ribonuclease activity"/>
    <property type="evidence" value="ECO:0007669"/>
    <property type="project" value="UniProtKB-UniRule"/>
</dbReference>
<dbReference type="GO" id="GO:0006260">
    <property type="term" value="P:DNA replication"/>
    <property type="evidence" value="ECO:0007669"/>
    <property type="project" value="UniProtKB-UniRule"/>
</dbReference>
<dbReference type="GO" id="GO:0052170">
    <property type="term" value="P:symbiont-mediated suppression of host innate immune response"/>
    <property type="evidence" value="ECO:0007669"/>
    <property type="project" value="UniProtKB-UniRule"/>
</dbReference>
<dbReference type="FunFam" id="3.30.70.270:FF:000009">
    <property type="entry name" value="Protein P"/>
    <property type="match status" value="1"/>
</dbReference>
<dbReference type="Gene3D" id="3.30.70.270">
    <property type="match status" value="1"/>
</dbReference>
<dbReference type="HAMAP" id="MF_04073">
    <property type="entry name" value="HBV_DPOL"/>
    <property type="match status" value="1"/>
</dbReference>
<dbReference type="InterPro" id="IPR043502">
    <property type="entry name" value="DNA/RNA_pol_sf"/>
</dbReference>
<dbReference type="InterPro" id="IPR001462">
    <property type="entry name" value="DNApol_viral_C"/>
</dbReference>
<dbReference type="InterPro" id="IPR000201">
    <property type="entry name" value="DNApol_viral_N"/>
</dbReference>
<dbReference type="InterPro" id="IPR037531">
    <property type="entry name" value="HBV_DPOL"/>
</dbReference>
<dbReference type="InterPro" id="IPR043128">
    <property type="entry name" value="Rev_trsase/Diguanyl_cyclase"/>
</dbReference>
<dbReference type="InterPro" id="IPR000477">
    <property type="entry name" value="RT_dom"/>
</dbReference>
<dbReference type="InterPro" id="IPR051320">
    <property type="entry name" value="Viral_Replic_Matur_Polypro"/>
</dbReference>
<dbReference type="PANTHER" id="PTHR33064">
    <property type="entry name" value="POL PROTEIN"/>
    <property type="match status" value="1"/>
</dbReference>
<dbReference type="PANTHER" id="PTHR33064:SF37">
    <property type="entry name" value="RIBONUCLEASE H"/>
    <property type="match status" value="1"/>
</dbReference>
<dbReference type="Pfam" id="PF00336">
    <property type="entry name" value="DNA_pol_viral_C"/>
    <property type="match status" value="1"/>
</dbReference>
<dbReference type="Pfam" id="PF00242">
    <property type="entry name" value="DNA_pol_viral_N"/>
    <property type="match status" value="1"/>
</dbReference>
<dbReference type="Pfam" id="PF00078">
    <property type="entry name" value="RVT_1"/>
    <property type="match status" value="1"/>
</dbReference>
<dbReference type="SUPFAM" id="SSF56672">
    <property type="entry name" value="DNA/RNA polymerases"/>
    <property type="match status" value="1"/>
</dbReference>
<dbReference type="PROSITE" id="PS50878">
    <property type="entry name" value="RT_POL"/>
    <property type="match status" value="1"/>
</dbReference>
<sequence length="843" mass="94383">MPLSYQHFRKLLLLDEEAGPLEEELPRLADEGLNRRVADDLNLGNLNVSIPWTHKVGNFTGLYSSTVPCFNPKWQTPSFPDIHLQEDIVDRCKQFVGPLTVNENRRLKLIMPARFYPNVTKYLPLDKGIKPYYPEYVVNHYFQTRHYLHTLWEAGILYKRESTRSASFCGSPYSWEQDLQHGRLVFQTSKRHGDKSFCPQSPGILPRSSVGPCIQSQLRKSRLGPQPAQGQLAGRQQGGSGSIRARVHPSPWGTVGVEPSGSGPTHNCASSSSSCLHQSAVRKAAYSLISTSKGHSSSGHAVELHHFPPNSSRSQSQGPVLSCWWLQFRNSEPCSEYCLYHIVNLIEDWGPCTEHGEHRIRTPRTPARVTGGVFLVDKNPHNTTESRLVVDFSQFSRGNTRVSWPKFAVPNLQSLTNLLSSNLSWLSLDVSAAFYHLPLHPAAMPHLLVGSSGLSRYVARLSSNSRIINNQHRTMQNLHNSCSRNLYVSLMLLYKTYGRKLHLYSHPIILGFRKIPMGVGLSPFLLAQFTSAICSVVRRAFPHCLAFSYMDDVVLGAKSVQHLESLYAAVTNFLLSLGIHLNPHKTKRWGYSLNFMGYVIGSWGTLPQEHIVQKIKMCFRKLPVNRPIDWKVCQRIVGLLGFAAPFTQCGYPALMPLYACIQAKQAFTFSPTYKAFLSKQYLNLYPVARQRPGLCQVFADATPTGWGLAIGHQRMRGTFVSPLPIHTAELLAACFARSRSGAKLIGTDNSVVLSRKYTAFPWLLGCAANWILRGTSFVYVPSALNPADDPSRGRLGLYRPLLRLLYRPTTGRTSLYADSPSVPSHLPDRVHFASPLHVAWXPP</sequence>
<evidence type="ECO:0000255" key="1">
    <source>
        <dbReference type="HAMAP-Rule" id="MF_04073"/>
    </source>
</evidence>
<evidence type="ECO:0000256" key="2">
    <source>
        <dbReference type="SAM" id="MobiDB-lite"/>
    </source>
</evidence>
<feature type="chain" id="PRO_0000323256" description="Protein P">
    <location>
        <begin position="1"/>
        <end position="843"/>
    </location>
</feature>
<feature type="domain" description="Reverse transcriptase" evidence="1">
    <location>
        <begin position="357"/>
        <end position="600"/>
    </location>
</feature>
<feature type="region of interest" description="Terminal protein domain (TP)" evidence="1">
    <location>
        <begin position="1"/>
        <end position="177"/>
    </location>
</feature>
<feature type="region of interest" description="Spacer" evidence="1">
    <location>
        <begin position="178"/>
        <end position="346"/>
    </location>
</feature>
<feature type="region of interest" description="Disordered" evidence="2">
    <location>
        <begin position="219"/>
        <end position="250"/>
    </location>
</feature>
<feature type="region of interest" description="Polymerase/reverse transcriptase domain (RT)" evidence="1">
    <location>
        <begin position="347"/>
        <end position="690"/>
    </location>
</feature>
<feature type="compositionally biased region" description="Low complexity" evidence="2">
    <location>
        <begin position="223"/>
        <end position="235"/>
    </location>
</feature>
<feature type="binding site" evidence="1">
    <location>
        <position position="429"/>
    </location>
    <ligand>
        <name>Mg(2+)</name>
        <dbReference type="ChEBI" id="CHEBI:18420"/>
        <note>catalytic</note>
    </ligand>
</feature>
<feature type="binding site" evidence="1">
    <location>
        <position position="551"/>
    </location>
    <ligand>
        <name>Mg(2+)</name>
        <dbReference type="ChEBI" id="CHEBI:18420"/>
        <note>catalytic</note>
    </ligand>
</feature>
<feature type="binding site" evidence="1">
    <location>
        <position position="552"/>
    </location>
    <ligand>
        <name>Mg(2+)</name>
        <dbReference type="ChEBI" id="CHEBI:18420"/>
        <note>catalytic</note>
    </ligand>
</feature>
<feature type="site" description="Priming of reverse-transcription by covalently linking the first nucleotide of the (-)DNA" evidence="1">
    <location>
        <position position="63"/>
    </location>
</feature>
<keyword id="KW-0235">DNA replication</keyword>
<keyword id="KW-0238">DNA-binding</keyword>
<keyword id="KW-0239">DNA-directed DNA polymerase</keyword>
<keyword id="KW-0255">Endonuclease</keyword>
<keyword id="KW-0945">Host-virus interaction</keyword>
<keyword id="KW-0378">Hydrolase</keyword>
<keyword id="KW-1090">Inhibition of host innate immune response by virus</keyword>
<keyword id="KW-1113">Inhibition of host RLR pathway by virus</keyword>
<keyword id="KW-0460">Magnesium</keyword>
<keyword id="KW-0479">Metal-binding</keyword>
<keyword id="KW-0511">Multifunctional enzyme</keyword>
<keyword id="KW-0540">Nuclease</keyword>
<keyword id="KW-0548">Nucleotidyltransferase</keyword>
<keyword id="KW-0695">RNA-directed DNA polymerase</keyword>
<keyword id="KW-0808">Transferase</keyword>
<keyword id="KW-0899">Viral immunoevasion</keyword>
<organism>
    <name type="scientific">Hepatitis B virus genotype B2 (isolate Vietnam/16091/1992)</name>
    <name type="common">HBV-B</name>
    <dbReference type="NCBI Taxonomy" id="489462"/>
    <lineage>
        <taxon>Viruses</taxon>
        <taxon>Riboviria</taxon>
        <taxon>Pararnavirae</taxon>
        <taxon>Artverviricota</taxon>
        <taxon>Revtraviricetes</taxon>
        <taxon>Blubervirales</taxon>
        <taxon>Hepadnaviridae</taxon>
        <taxon>Orthohepadnavirus</taxon>
        <taxon>Hepatitis B virus</taxon>
    </lineage>
</organism>
<name>DPOL_HBVB5</name>
<protein>
    <recommendedName>
        <fullName evidence="1">Protein P</fullName>
    </recommendedName>
    <domain>
        <recommendedName>
            <fullName evidence="1">DNA-directed DNA polymerase</fullName>
            <ecNumber evidence="1">2.7.7.7</ecNumber>
        </recommendedName>
    </domain>
    <domain>
        <recommendedName>
            <fullName evidence="1">RNA-directed DNA polymerase</fullName>
            <ecNumber evidence="1">2.7.7.49</ecNumber>
        </recommendedName>
    </domain>
    <domain>
        <recommendedName>
            <fullName evidence="1">Ribonuclease H</fullName>
            <ecNumber evidence="1">3.1.26.4</ecNumber>
        </recommendedName>
    </domain>
</protein>
<proteinExistence type="inferred from homology"/>
<comment type="function">
    <text evidence="1">Multifunctional enzyme that converts the viral RNA genome into dsDNA in viral cytoplasmic capsids. This enzyme displays a DNA polymerase activity that can copy either DNA or RNA templates, and a ribonuclease H (RNase H) activity that cleaves the RNA strand of RNA-DNA heteroduplexes in a partially processive 3'- to 5'-endonucleasic mode. Neo-synthesized pregenomic RNA (pgRNA) are encapsidated together with the P protein, and reverse-transcribed inside the nucleocapsid. Initiation of reverse-transcription occurs first by binding the epsilon loop on the pgRNA genome, and is initiated by protein priming, thereby the 5'-end of (-)DNA is covalently linked to P protein. Partial (+)DNA is synthesized from the (-)DNA template and generates the relaxed circular DNA (RC-DNA) genome. After budding and infection, the RC-DNA migrates in the nucleus, and is converted into a plasmid-like covalently closed circular DNA (cccDNA). The activity of P protein does not seem to be necessary for cccDNA generation, and is presumably released from (+)DNA by host nuclear DNA repair machinery.</text>
</comment>
<comment type="catalytic activity">
    <reaction evidence="1">
        <text>DNA(n) + a 2'-deoxyribonucleoside 5'-triphosphate = DNA(n+1) + diphosphate</text>
        <dbReference type="Rhea" id="RHEA:22508"/>
        <dbReference type="Rhea" id="RHEA-COMP:17339"/>
        <dbReference type="Rhea" id="RHEA-COMP:17340"/>
        <dbReference type="ChEBI" id="CHEBI:33019"/>
        <dbReference type="ChEBI" id="CHEBI:61560"/>
        <dbReference type="ChEBI" id="CHEBI:173112"/>
        <dbReference type="EC" id="2.7.7.7"/>
    </reaction>
</comment>
<comment type="catalytic activity">
    <reaction evidence="1">
        <text>DNA(n) + a 2'-deoxyribonucleoside 5'-triphosphate = DNA(n+1) + diphosphate</text>
        <dbReference type="Rhea" id="RHEA:22508"/>
        <dbReference type="Rhea" id="RHEA-COMP:17339"/>
        <dbReference type="Rhea" id="RHEA-COMP:17340"/>
        <dbReference type="ChEBI" id="CHEBI:33019"/>
        <dbReference type="ChEBI" id="CHEBI:61560"/>
        <dbReference type="ChEBI" id="CHEBI:173112"/>
        <dbReference type="EC" id="2.7.7.49"/>
    </reaction>
</comment>
<comment type="catalytic activity">
    <reaction evidence="1">
        <text>Endonucleolytic cleavage to 5'-phosphomonoester.</text>
        <dbReference type="EC" id="3.1.26.4"/>
    </reaction>
</comment>
<comment type="activity regulation">
    <text evidence="1">Activated by host HSP70 and HSP40 in vitro to be able to bind the epsilon loop of the pgRNA. Because deletion of the RNase H region renders the protein partly chaperone-independent, the chaperones may be needed indirectly to relieve occlusion of the RNA-binding site by this domain. Inhibited by several reverse-transcriptase inhibitors: Lamivudine, Adefovir and Entecavir.</text>
</comment>
<comment type="domain">
    <text evidence="1">Terminal protein domain (TP) is hepadnavirus-specific. Spacer domain is highly variable and separates the TP and RT domains. Polymerase/reverse-transcriptase domain (RT) and ribonuclease H domain (RH) are similar to retrovirus reverse transcriptase/RNase H.</text>
</comment>
<comment type="domain">
    <text evidence="1">The polymerase/reverse transcriptase (RT) and ribonuclease H (RH) domains are structured in five subdomains: finger, palm, thumb, connection and RNase H. Within the palm subdomain, the 'primer grip' region is thought to be involved in the positioning of the primer terminus for accommodating the incoming nucleotide. The RH domain stabilizes the association of RT with primer-template.</text>
</comment>
<comment type="miscellaneous">
    <text evidence="1">Hepadnaviral virions contain probably just one P protein molecule per particle.</text>
</comment>
<comment type="similarity">
    <text evidence="1">Belongs to the hepadnaviridae P protein family.</text>
</comment>
<organismHost>
    <name type="scientific">Homo sapiens</name>
    <name type="common">Human</name>
    <dbReference type="NCBI Taxonomy" id="9606"/>
</organismHost>
<organismHost>
    <name type="scientific">Pan troglodytes</name>
    <name type="common">Chimpanzee</name>
    <dbReference type="NCBI Taxonomy" id="9598"/>
</organismHost>
<accession>Q9PX62</accession>